<dbReference type="EC" id="5.1.1.1" evidence="1"/>
<dbReference type="EMBL" id="CP001358">
    <property type="protein sequence ID" value="ACL48091.1"/>
    <property type="molecule type" value="Genomic_DNA"/>
</dbReference>
<dbReference type="SMR" id="B8J2K3"/>
<dbReference type="STRING" id="525146.Ddes_0171"/>
<dbReference type="KEGG" id="dds:Ddes_0171"/>
<dbReference type="eggNOG" id="COG0787">
    <property type="taxonomic scope" value="Bacteria"/>
</dbReference>
<dbReference type="HOGENOM" id="CLU_028393_2_2_7"/>
<dbReference type="UniPathway" id="UPA00042">
    <property type="reaction ID" value="UER00497"/>
</dbReference>
<dbReference type="GO" id="GO:0005829">
    <property type="term" value="C:cytosol"/>
    <property type="evidence" value="ECO:0007669"/>
    <property type="project" value="TreeGrafter"/>
</dbReference>
<dbReference type="GO" id="GO:0008784">
    <property type="term" value="F:alanine racemase activity"/>
    <property type="evidence" value="ECO:0007669"/>
    <property type="project" value="UniProtKB-UniRule"/>
</dbReference>
<dbReference type="GO" id="GO:0030170">
    <property type="term" value="F:pyridoxal phosphate binding"/>
    <property type="evidence" value="ECO:0007669"/>
    <property type="project" value="UniProtKB-UniRule"/>
</dbReference>
<dbReference type="GO" id="GO:0030632">
    <property type="term" value="P:D-alanine biosynthetic process"/>
    <property type="evidence" value="ECO:0007669"/>
    <property type="project" value="UniProtKB-UniRule"/>
</dbReference>
<dbReference type="GO" id="GO:0009252">
    <property type="term" value="P:peptidoglycan biosynthetic process"/>
    <property type="evidence" value="ECO:0007669"/>
    <property type="project" value="TreeGrafter"/>
</dbReference>
<dbReference type="CDD" id="cd00430">
    <property type="entry name" value="PLPDE_III_AR"/>
    <property type="match status" value="1"/>
</dbReference>
<dbReference type="FunFam" id="2.40.37.10:FF:000006">
    <property type="entry name" value="Alanine racemase"/>
    <property type="match status" value="1"/>
</dbReference>
<dbReference type="FunFam" id="3.20.20.10:FF:000002">
    <property type="entry name" value="Alanine racemase"/>
    <property type="match status" value="1"/>
</dbReference>
<dbReference type="Gene3D" id="3.20.20.10">
    <property type="entry name" value="Alanine racemase"/>
    <property type="match status" value="1"/>
</dbReference>
<dbReference type="Gene3D" id="2.40.37.10">
    <property type="entry name" value="Lyase, Ornithine Decarboxylase, Chain A, domain 1"/>
    <property type="match status" value="1"/>
</dbReference>
<dbReference type="HAMAP" id="MF_01201">
    <property type="entry name" value="Ala_racemase"/>
    <property type="match status" value="1"/>
</dbReference>
<dbReference type="InterPro" id="IPR000821">
    <property type="entry name" value="Ala_racemase"/>
</dbReference>
<dbReference type="InterPro" id="IPR009006">
    <property type="entry name" value="Ala_racemase/Decarboxylase_C"/>
</dbReference>
<dbReference type="InterPro" id="IPR011079">
    <property type="entry name" value="Ala_racemase_C"/>
</dbReference>
<dbReference type="InterPro" id="IPR001608">
    <property type="entry name" value="Ala_racemase_N"/>
</dbReference>
<dbReference type="InterPro" id="IPR029066">
    <property type="entry name" value="PLP-binding_barrel"/>
</dbReference>
<dbReference type="NCBIfam" id="TIGR00492">
    <property type="entry name" value="alr"/>
    <property type="match status" value="1"/>
</dbReference>
<dbReference type="PANTHER" id="PTHR30511">
    <property type="entry name" value="ALANINE RACEMASE"/>
    <property type="match status" value="1"/>
</dbReference>
<dbReference type="PANTHER" id="PTHR30511:SF0">
    <property type="entry name" value="ALANINE RACEMASE, CATABOLIC-RELATED"/>
    <property type="match status" value="1"/>
</dbReference>
<dbReference type="Pfam" id="PF00842">
    <property type="entry name" value="Ala_racemase_C"/>
    <property type="match status" value="1"/>
</dbReference>
<dbReference type="Pfam" id="PF01168">
    <property type="entry name" value="Ala_racemase_N"/>
    <property type="match status" value="1"/>
</dbReference>
<dbReference type="PRINTS" id="PR00992">
    <property type="entry name" value="ALARACEMASE"/>
</dbReference>
<dbReference type="SMART" id="SM01005">
    <property type="entry name" value="Ala_racemase_C"/>
    <property type="match status" value="1"/>
</dbReference>
<dbReference type="SUPFAM" id="SSF50621">
    <property type="entry name" value="Alanine racemase C-terminal domain-like"/>
    <property type="match status" value="1"/>
</dbReference>
<dbReference type="SUPFAM" id="SSF51419">
    <property type="entry name" value="PLP-binding barrel"/>
    <property type="match status" value="1"/>
</dbReference>
<gene>
    <name type="primary">alr</name>
    <name type="ordered locus">Ddes_0171</name>
</gene>
<keyword id="KW-0413">Isomerase</keyword>
<keyword id="KW-0663">Pyridoxal phosphate</keyword>
<accession>B8J2K3</accession>
<reference key="1">
    <citation type="submission" date="2009-01" db="EMBL/GenBank/DDBJ databases">
        <title>Complete sequence of Desulfovibrio desulfuricans subsp. desulfuricans str. ATCC 27774.</title>
        <authorList>
            <consortium name="US DOE Joint Genome Institute"/>
            <person name="Lucas S."/>
            <person name="Copeland A."/>
            <person name="Lapidus A."/>
            <person name="Glavina del Rio T."/>
            <person name="Tice H."/>
            <person name="Bruce D."/>
            <person name="Goodwin L."/>
            <person name="Pitluck S."/>
            <person name="Sims D."/>
            <person name="Lu M."/>
            <person name="Kiss H."/>
            <person name="Meineke L."/>
            <person name="Brettin T."/>
            <person name="Detter J.C."/>
            <person name="Han C."/>
            <person name="Larimer F."/>
            <person name="Land M."/>
            <person name="Hauser L."/>
            <person name="Kyrpides N."/>
            <person name="Ovchinnikova G."/>
            <person name="Hazen T.C."/>
        </authorList>
    </citation>
    <scope>NUCLEOTIDE SEQUENCE [LARGE SCALE GENOMIC DNA]</scope>
    <source>
        <strain>ATCC 27774 / DSM 6949 / MB</strain>
    </source>
</reference>
<comment type="function">
    <text evidence="1">Catalyzes the interconversion of L-alanine and D-alanine. May also act on other amino acids.</text>
</comment>
<comment type="catalytic activity">
    <reaction evidence="1">
        <text>L-alanine = D-alanine</text>
        <dbReference type="Rhea" id="RHEA:20249"/>
        <dbReference type="ChEBI" id="CHEBI:57416"/>
        <dbReference type="ChEBI" id="CHEBI:57972"/>
        <dbReference type="EC" id="5.1.1.1"/>
    </reaction>
</comment>
<comment type="cofactor">
    <cofactor evidence="1">
        <name>pyridoxal 5'-phosphate</name>
        <dbReference type="ChEBI" id="CHEBI:597326"/>
    </cofactor>
</comment>
<comment type="pathway">
    <text evidence="1">Amino-acid biosynthesis; D-alanine biosynthesis; D-alanine from L-alanine: step 1/1.</text>
</comment>
<comment type="similarity">
    <text evidence="1">Belongs to the alanine racemase family.</text>
</comment>
<feature type="chain" id="PRO_1000213832" description="Alanine racemase">
    <location>
        <begin position="1"/>
        <end position="371"/>
    </location>
</feature>
<feature type="active site" description="Proton acceptor; specific for D-alanine" evidence="1">
    <location>
        <position position="39"/>
    </location>
</feature>
<feature type="active site" description="Proton acceptor; specific for L-alanine" evidence="1">
    <location>
        <position position="266"/>
    </location>
</feature>
<feature type="binding site" evidence="1">
    <location>
        <position position="137"/>
    </location>
    <ligand>
        <name>substrate</name>
    </ligand>
</feature>
<feature type="binding site" evidence="1">
    <location>
        <position position="314"/>
    </location>
    <ligand>
        <name>substrate</name>
    </ligand>
</feature>
<feature type="modified residue" description="N6-(pyridoxal phosphate)lysine" evidence="1">
    <location>
        <position position="39"/>
    </location>
</feature>
<evidence type="ECO:0000255" key="1">
    <source>
        <dbReference type="HAMAP-Rule" id="MF_01201"/>
    </source>
</evidence>
<organism>
    <name type="scientific">Desulfovibrio desulfuricans (strain ATCC 27774 / DSM 6949 / MB)</name>
    <dbReference type="NCBI Taxonomy" id="525146"/>
    <lineage>
        <taxon>Bacteria</taxon>
        <taxon>Pseudomonadati</taxon>
        <taxon>Thermodesulfobacteriota</taxon>
        <taxon>Desulfovibrionia</taxon>
        <taxon>Desulfovibrionales</taxon>
        <taxon>Desulfovibrionaceae</taxon>
        <taxon>Desulfovibrio</taxon>
    </lineage>
</organism>
<protein>
    <recommendedName>
        <fullName evidence="1">Alanine racemase</fullName>
        <ecNumber evidence="1">5.1.1.1</ecNumber>
    </recommendedName>
</protein>
<proteinExistence type="inferred from homology"/>
<sequence>MVSFDRPVWAEIDLSAFRHNMRQIKSLLQPGTIFCPIIKADGYGHGAVPLAHEAVAMGAGYLGVAILDEAAALRAAGITLPILILGYTPPQAAAFVVSNHITQTIFSKEQADALSAAASNLGITVKVHVKVDTGMTRIGVRPEEAAAFCSYVAGLENVHLEGMFTHFASSDSADHAYCLEQFGRFTAAIAAVEASGIRLGIRHCANSAAILSLPEGHLDMVRAGIILYGLKPSDECPMPIDLRPVMRLKARLAMVKQVPPGVGVSYGSIYHTQKESSLATIPIGYADGYTRMLSRKAQVLLRGQRAPVVGRICMDQCMVDVSHVPQAAVGDEVLLFGGPDLPADEIAAHLGTINYEVVCMVGKRVPRVYVE</sequence>
<name>ALR_DESDA</name>